<protein>
    <recommendedName>
        <fullName evidence="1">7-methyl-GTP pyrophosphatase</fullName>
        <shortName evidence="1">m(7)GTP pyrophosphatase</shortName>
        <ecNumber evidence="1">3.6.1.-</ecNumber>
    </recommendedName>
</protein>
<dbReference type="EC" id="3.6.1.-" evidence="1"/>
<dbReference type="EMBL" id="CP000076">
    <property type="protein sequence ID" value="AAY91080.1"/>
    <property type="molecule type" value="Genomic_DNA"/>
</dbReference>
<dbReference type="RefSeq" id="WP_011060114.1">
    <property type="nucleotide sequence ID" value="NC_004129.6"/>
</dbReference>
<dbReference type="SMR" id="Q4KFS2"/>
<dbReference type="STRING" id="220664.PFL_1791"/>
<dbReference type="KEGG" id="pfl:PFL_1791"/>
<dbReference type="PATRIC" id="fig|220664.5.peg.1825"/>
<dbReference type="eggNOG" id="COG0424">
    <property type="taxonomic scope" value="Bacteria"/>
</dbReference>
<dbReference type="HOGENOM" id="CLU_040416_1_0_6"/>
<dbReference type="Proteomes" id="UP000008540">
    <property type="component" value="Chromosome"/>
</dbReference>
<dbReference type="GO" id="GO:0005737">
    <property type="term" value="C:cytoplasm"/>
    <property type="evidence" value="ECO:0007669"/>
    <property type="project" value="UniProtKB-SubCell"/>
</dbReference>
<dbReference type="GO" id="GO:0047429">
    <property type="term" value="F:nucleoside triphosphate diphosphatase activity"/>
    <property type="evidence" value="ECO:0007669"/>
    <property type="project" value="InterPro"/>
</dbReference>
<dbReference type="GO" id="GO:0009117">
    <property type="term" value="P:nucleotide metabolic process"/>
    <property type="evidence" value="ECO:0007669"/>
    <property type="project" value="UniProtKB-KW"/>
</dbReference>
<dbReference type="CDD" id="cd00555">
    <property type="entry name" value="Maf"/>
    <property type="match status" value="1"/>
</dbReference>
<dbReference type="FunFam" id="3.90.950.10:FF:000005">
    <property type="entry name" value="7-methyl-GTP pyrophosphatase"/>
    <property type="match status" value="1"/>
</dbReference>
<dbReference type="Gene3D" id="3.90.950.10">
    <property type="match status" value="1"/>
</dbReference>
<dbReference type="HAMAP" id="MF_00528">
    <property type="entry name" value="Maf"/>
    <property type="match status" value="1"/>
</dbReference>
<dbReference type="InterPro" id="IPR029001">
    <property type="entry name" value="ITPase-like_fam"/>
</dbReference>
<dbReference type="InterPro" id="IPR003697">
    <property type="entry name" value="Maf-like"/>
</dbReference>
<dbReference type="NCBIfam" id="TIGR00172">
    <property type="entry name" value="maf"/>
    <property type="match status" value="1"/>
</dbReference>
<dbReference type="PANTHER" id="PTHR43213:SF10">
    <property type="entry name" value="7-METHYL-GTP PYROPHOSPHATASE"/>
    <property type="match status" value="1"/>
</dbReference>
<dbReference type="PANTHER" id="PTHR43213">
    <property type="entry name" value="BIFUNCTIONAL DTTP/UTP PYROPHOSPHATASE/METHYLTRANSFERASE PROTEIN-RELATED"/>
    <property type="match status" value="1"/>
</dbReference>
<dbReference type="Pfam" id="PF02545">
    <property type="entry name" value="Maf"/>
    <property type="match status" value="1"/>
</dbReference>
<dbReference type="PIRSF" id="PIRSF006305">
    <property type="entry name" value="Maf"/>
    <property type="match status" value="1"/>
</dbReference>
<dbReference type="SUPFAM" id="SSF52972">
    <property type="entry name" value="ITPase-like"/>
    <property type="match status" value="1"/>
</dbReference>
<reference key="1">
    <citation type="journal article" date="2005" name="Nat. Biotechnol.">
        <title>Complete genome sequence of the plant commensal Pseudomonas fluorescens Pf-5.</title>
        <authorList>
            <person name="Paulsen I.T."/>
            <person name="Press C.M."/>
            <person name="Ravel J."/>
            <person name="Kobayashi D.Y."/>
            <person name="Myers G.S.A."/>
            <person name="Mavrodi D.V."/>
            <person name="DeBoy R.T."/>
            <person name="Seshadri R."/>
            <person name="Ren Q."/>
            <person name="Madupu R."/>
            <person name="Dodson R.J."/>
            <person name="Durkin A.S."/>
            <person name="Brinkac L.M."/>
            <person name="Daugherty S.C."/>
            <person name="Sullivan S.A."/>
            <person name="Rosovitz M.J."/>
            <person name="Gwinn M.L."/>
            <person name="Zhou L."/>
            <person name="Schneider D.J."/>
            <person name="Cartinhour S.W."/>
            <person name="Nelson W.C."/>
            <person name="Weidman J."/>
            <person name="Watkins K."/>
            <person name="Tran K."/>
            <person name="Khouri H."/>
            <person name="Pierson E.A."/>
            <person name="Pierson L.S. III"/>
            <person name="Thomashow L.S."/>
            <person name="Loper J.E."/>
        </authorList>
    </citation>
    <scope>NUCLEOTIDE SEQUENCE [LARGE SCALE GENOMIC DNA]</scope>
    <source>
        <strain>ATCC BAA-477 / NRRL B-23932 / Pf-5</strain>
    </source>
</reference>
<feature type="chain" id="PRO_0000267379" description="7-methyl-GTP pyrophosphatase">
    <location>
        <begin position="1"/>
        <end position="192"/>
    </location>
</feature>
<feature type="active site" description="Proton acceptor" evidence="1">
    <location>
        <position position="69"/>
    </location>
</feature>
<feature type="site" description="Important for substrate specificity" evidence="1">
    <location>
        <position position="12"/>
    </location>
</feature>
<feature type="site" description="Important for substrate specificity" evidence="1">
    <location>
        <position position="70"/>
    </location>
</feature>
<feature type="site" description="Important for substrate specificity" evidence="1">
    <location>
        <position position="154"/>
    </location>
</feature>
<name>NTPPB_PSEF5</name>
<organism>
    <name type="scientific">Pseudomonas fluorescens (strain ATCC BAA-477 / NRRL B-23932 / Pf-5)</name>
    <dbReference type="NCBI Taxonomy" id="220664"/>
    <lineage>
        <taxon>Bacteria</taxon>
        <taxon>Pseudomonadati</taxon>
        <taxon>Pseudomonadota</taxon>
        <taxon>Gammaproteobacteria</taxon>
        <taxon>Pseudomonadales</taxon>
        <taxon>Pseudomonadaceae</taxon>
        <taxon>Pseudomonas</taxon>
    </lineage>
</organism>
<sequence length="192" mass="20685">MLPLLLASSSAYRRELLSRLRLPFTCCSPDIDESHRPGESATALVKRLAEEKARALASSHPAHLIIGSDQVAVLGERIIGKPHTFEKARQQLLDASGASVTFLTGLALLNSQTGHCQVDCVPFTVNMRTLDSTRIERYLHAEQPYDCAGSFKAEGLGVSLFQSTAGSDATSLIGLPLIRLVDMLLAEGVETP</sequence>
<accession>Q4KFS2</accession>
<proteinExistence type="inferred from homology"/>
<comment type="function">
    <text evidence="1">Nucleoside triphosphate pyrophosphatase that hydrolyzes 7-methyl-GTP (m(7)GTP). May have a dual role in cell division arrest and in preventing the incorporation of modified nucleotides into cellular nucleic acids.</text>
</comment>
<comment type="catalytic activity">
    <reaction evidence="1">
        <text>N(7)-methyl-GTP + H2O = N(7)-methyl-GMP + diphosphate + H(+)</text>
        <dbReference type="Rhea" id="RHEA:58744"/>
        <dbReference type="ChEBI" id="CHEBI:15377"/>
        <dbReference type="ChEBI" id="CHEBI:15378"/>
        <dbReference type="ChEBI" id="CHEBI:33019"/>
        <dbReference type="ChEBI" id="CHEBI:58285"/>
        <dbReference type="ChEBI" id="CHEBI:87133"/>
    </reaction>
</comment>
<comment type="cofactor">
    <cofactor evidence="1">
        <name>a divalent metal cation</name>
        <dbReference type="ChEBI" id="CHEBI:60240"/>
    </cofactor>
</comment>
<comment type="subcellular location">
    <subcellularLocation>
        <location evidence="1">Cytoplasm</location>
    </subcellularLocation>
</comment>
<comment type="similarity">
    <text evidence="1">Belongs to the Maf family. YceF subfamily.</text>
</comment>
<gene>
    <name type="ordered locus">PFL_1791</name>
</gene>
<keyword id="KW-0963">Cytoplasm</keyword>
<keyword id="KW-0378">Hydrolase</keyword>
<keyword id="KW-0546">Nucleotide metabolism</keyword>
<evidence type="ECO:0000255" key="1">
    <source>
        <dbReference type="HAMAP-Rule" id="MF_00528"/>
    </source>
</evidence>